<dbReference type="PIR" id="A02454">
    <property type="entry name" value="HBFGRE"/>
</dbReference>
<dbReference type="SMR" id="P02134"/>
<dbReference type="GO" id="GO:0072562">
    <property type="term" value="C:blood microparticle"/>
    <property type="evidence" value="ECO:0007669"/>
    <property type="project" value="TreeGrafter"/>
</dbReference>
<dbReference type="GO" id="GO:0031838">
    <property type="term" value="C:haptoglobin-hemoglobin complex"/>
    <property type="evidence" value="ECO:0007669"/>
    <property type="project" value="TreeGrafter"/>
</dbReference>
<dbReference type="GO" id="GO:0005833">
    <property type="term" value="C:hemoglobin complex"/>
    <property type="evidence" value="ECO:0007669"/>
    <property type="project" value="InterPro"/>
</dbReference>
<dbReference type="GO" id="GO:0031720">
    <property type="term" value="F:haptoglobin binding"/>
    <property type="evidence" value="ECO:0007669"/>
    <property type="project" value="TreeGrafter"/>
</dbReference>
<dbReference type="GO" id="GO:0020037">
    <property type="term" value="F:heme binding"/>
    <property type="evidence" value="ECO:0007669"/>
    <property type="project" value="InterPro"/>
</dbReference>
<dbReference type="GO" id="GO:0046872">
    <property type="term" value="F:metal ion binding"/>
    <property type="evidence" value="ECO:0007669"/>
    <property type="project" value="UniProtKB-KW"/>
</dbReference>
<dbReference type="GO" id="GO:0043177">
    <property type="term" value="F:organic acid binding"/>
    <property type="evidence" value="ECO:0007669"/>
    <property type="project" value="TreeGrafter"/>
</dbReference>
<dbReference type="GO" id="GO:0019825">
    <property type="term" value="F:oxygen binding"/>
    <property type="evidence" value="ECO:0007669"/>
    <property type="project" value="InterPro"/>
</dbReference>
<dbReference type="GO" id="GO:0005344">
    <property type="term" value="F:oxygen carrier activity"/>
    <property type="evidence" value="ECO:0007669"/>
    <property type="project" value="UniProtKB-KW"/>
</dbReference>
<dbReference type="GO" id="GO:0004601">
    <property type="term" value="F:peroxidase activity"/>
    <property type="evidence" value="ECO:0007669"/>
    <property type="project" value="TreeGrafter"/>
</dbReference>
<dbReference type="GO" id="GO:0042744">
    <property type="term" value="P:hydrogen peroxide catabolic process"/>
    <property type="evidence" value="ECO:0007669"/>
    <property type="project" value="TreeGrafter"/>
</dbReference>
<dbReference type="CDD" id="cd08925">
    <property type="entry name" value="Hb-beta-like"/>
    <property type="match status" value="1"/>
</dbReference>
<dbReference type="Gene3D" id="1.10.490.10">
    <property type="entry name" value="Globins"/>
    <property type="match status" value="1"/>
</dbReference>
<dbReference type="InterPro" id="IPR000971">
    <property type="entry name" value="Globin"/>
</dbReference>
<dbReference type="InterPro" id="IPR009050">
    <property type="entry name" value="Globin-like_sf"/>
</dbReference>
<dbReference type="InterPro" id="IPR012292">
    <property type="entry name" value="Globin/Proto"/>
</dbReference>
<dbReference type="InterPro" id="IPR002337">
    <property type="entry name" value="Hemoglobin_b"/>
</dbReference>
<dbReference type="InterPro" id="IPR050056">
    <property type="entry name" value="Hemoglobin_oxygen_transport"/>
</dbReference>
<dbReference type="PANTHER" id="PTHR11442">
    <property type="entry name" value="HEMOGLOBIN FAMILY MEMBER"/>
    <property type="match status" value="1"/>
</dbReference>
<dbReference type="PANTHER" id="PTHR11442:SF100">
    <property type="entry name" value="HEMOGLOBIN SUBUNIT BETA-1"/>
    <property type="match status" value="1"/>
</dbReference>
<dbReference type="Pfam" id="PF00042">
    <property type="entry name" value="Globin"/>
    <property type="match status" value="1"/>
</dbReference>
<dbReference type="PRINTS" id="PR00814">
    <property type="entry name" value="BETAHAEM"/>
</dbReference>
<dbReference type="SUPFAM" id="SSF46458">
    <property type="entry name" value="Globin-like"/>
    <property type="match status" value="1"/>
</dbReference>
<dbReference type="PROSITE" id="PS01033">
    <property type="entry name" value="GLOBIN"/>
    <property type="match status" value="1"/>
</dbReference>
<name>HBB_PELLE</name>
<organism>
    <name type="scientific">Pelophylax lessonae</name>
    <name type="common">Pool frog</name>
    <name type="synonym">Rana lessonae</name>
    <dbReference type="NCBI Taxonomy" id="45623"/>
    <lineage>
        <taxon>Eukaryota</taxon>
        <taxon>Metazoa</taxon>
        <taxon>Chordata</taxon>
        <taxon>Craniata</taxon>
        <taxon>Vertebrata</taxon>
        <taxon>Euteleostomi</taxon>
        <taxon>Amphibia</taxon>
        <taxon>Batrachia</taxon>
        <taxon>Anura</taxon>
        <taxon>Neobatrachia</taxon>
        <taxon>Ranoidea</taxon>
        <taxon>Ranidae</taxon>
        <taxon>Pelophylax</taxon>
    </lineage>
</organism>
<keyword id="KW-0903">Direct protein sequencing</keyword>
<keyword id="KW-0349">Heme</keyword>
<keyword id="KW-0408">Iron</keyword>
<keyword id="KW-0479">Metal-binding</keyword>
<keyword id="KW-0561">Oxygen transport</keyword>
<keyword id="KW-0813">Transport</keyword>
<comment type="function">
    <text>Involved in oxygen transport from the lung to the various peripheral tissues.</text>
</comment>
<comment type="subunit">
    <text>Heterotetramer of two alpha chains and two beta chains.</text>
</comment>
<comment type="tissue specificity">
    <text>Red blood cells.</text>
</comment>
<comment type="similarity">
    <text evidence="1">Belongs to the globin family.</text>
</comment>
<sequence>GSDLVSGFWGKVDAHKIGGEALARLLVVYPWTQRYFTTFGNLGSADAICHNAKVLAHGEKVLAAIGEGLKHPENLKAHYAKLSEYHSNKLHVDPANFRLLGNVFITVLARHFQHEFTPELQHALEAHFCAVGDALAKAYH</sequence>
<accession>P02134</accession>
<proteinExistence type="evidence at protein level"/>
<evidence type="ECO:0000255" key="1">
    <source>
        <dbReference type="PROSITE-ProRule" id="PRU00238"/>
    </source>
</evidence>
<protein>
    <recommendedName>
        <fullName>Hemoglobin subunit beta</fullName>
    </recommendedName>
    <alternativeName>
        <fullName>Beta-globin</fullName>
    </alternativeName>
    <alternativeName>
        <fullName>Hemoglobin beta chain</fullName>
    </alternativeName>
</protein>
<reference key="1">
    <citation type="journal article" date="1972" name="Biochemistry">
        <title>Phylogeny of hemoglobins. Beta chain of frog (Rana esculenta) hemoglobin.</title>
        <authorList>
            <person name="Chauvet J.-P."/>
            <person name="Acher R."/>
        </authorList>
    </citation>
    <scope>PROTEIN SEQUENCE</scope>
</reference>
<feature type="chain" id="PRO_0000053088" description="Hemoglobin subunit beta">
    <location>
        <begin position="1"/>
        <end position="140"/>
    </location>
</feature>
<feature type="domain" description="Globin" evidence="1">
    <location>
        <begin position="1"/>
        <end position="140"/>
    </location>
</feature>
<feature type="binding site" description="distal binding residue">
    <location>
        <position position="57"/>
    </location>
    <ligand>
        <name>heme b</name>
        <dbReference type="ChEBI" id="CHEBI:60344"/>
    </ligand>
    <ligandPart>
        <name>Fe</name>
        <dbReference type="ChEBI" id="CHEBI:18248"/>
    </ligandPart>
</feature>
<feature type="binding site" description="proximal binding residue">
    <location>
        <position position="86"/>
    </location>
    <ligand>
        <name>heme b</name>
        <dbReference type="ChEBI" id="CHEBI:60344"/>
    </ligand>
    <ligandPart>
        <name>Fe</name>
        <dbReference type="ChEBI" id="CHEBI:18248"/>
    </ligandPart>
</feature>
<gene>
    <name type="primary">HBB</name>
</gene>